<name>DNAK2_ALIF1</name>
<feature type="chain" id="PRO_0000226027" description="Chaperone protein DnaK 2">
    <location>
        <begin position="1"/>
        <end position="634"/>
    </location>
</feature>
<feature type="region of interest" description="Disordered" evidence="2">
    <location>
        <begin position="602"/>
        <end position="634"/>
    </location>
</feature>
<feature type="compositionally biased region" description="Low complexity" evidence="2">
    <location>
        <begin position="602"/>
        <end position="613"/>
    </location>
</feature>
<feature type="modified residue" description="Phosphothreonine; by autocatalysis" evidence="1">
    <location>
        <position position="198"/>
    </location>
</feature>
<keyword id="KW-0067">ATP-binding</keyword>
<keyword id="KW-0143">Chaperone</keyword>
<keyword id="KW-0547">Nucleotide-binding</keyword>
<keyword id="KW-0597">Phosphoprotein</keyword>
<keyword id="KW-1185">Reference proteome</keyword>
<keyword id="KW-0346">Stress response</keyword>
<dbReference type="EMBL" id="CP000020">
    <property type="protein sequence ID" value="AAW86489.1"/>
    <property type="molecule type" value="Genomic_DNA"/>
</dbReference>
<dbReference type="RefSeq" id="WP_011262456.1">
    <property type="nucleotide sequence ID" value="NC_006840.2"/>
</dbReference>
<dbReference type="RefSeq" id="YP_205377.1">
    <property type="nucleotide sequence ID" value="NC_006840.2"/>
</dbReference>
<dbReference type="SMR" id="Q5E3A7"/>
<dbReference type="STRING" id="312309.VF_1994"/>
<dbReference type="EnsemblBacteria" id="AAW86489">
    <property type="protein sequence ID" value="AAW86489"/>
    <property type="gene ID" value="VF_1994"/>
</dbReference>
<dbReference type="GeneID" id="54164690"/>
<dbReference type="KEGG" id="vfi:VF_1994"/>
<dbReference type="PATRIC" id="fig|312309.11.peg.2021"/>
<dbReference type="eggNOG" id="COG0443">
    <property type="taxonomic scope" value="Bacteria"/>
</dbReference>
<dbReference type="HOGENOM" id="CLU_005965_2_1_6"/>
<dbReference type="OrthoDB" id="9766019at2"/>
<dbReference type="Proteomes" id="UP000000537">
    <property type="component" value="Chromosome I"/>
</dbReference>
<dbReference type="GO" id="GO:0005524">
    <property type="term" value="F:ATP binding"/>
    <property type="evidence" value="ECO:0007669"/>
    <property type="project" value="UniProtKB-UniRule"/>
</dbReference>
<dbReference type="GO" id="GO:0140662">
    <property type="term" value="F:ATP-dependent protein folding chaperone"/>
    <property type="evidence" value="ECO:0007669"/>
    <property type="project" value="InterPro"/>
</dbReference>
<dbReference type="GO" id="GO:0051082">
    <property type="term" value="F:unfolded protein binding"/>
    <property type="evidence" value="ECO:0007669"/>
    <property type="project" value="InterPro"/>
</dbReference>
<dbReference type="CDD" id="cd10234">
    <property type="entry name" value="ASKHA_NBD_HSP70_DnaK-like"/>
    <property type="match status" value="1"/>
</dbReference>
<dbReference type="FunFam" id="2.60.34.10:FF:000014">
    <property type="entry name" value="Chaperone protein DnaK HSP70"/>
    <property type="match status" value="1"/>
</dbReference>
<dbReference type="FunFam" id="3.30.30.30:FF:000003">
    <property type="entry name" value="Heat shock protein 9"/>
    <property type="match status" value="1"/>
</dbReference>
<dbReference type="FunFam" id="1.20.1270.10:FF:000001">
    <property type="entry name" value="Molecular chaperone DnaK"/>
    <property type="match status" value="1"/>
</dbReference>
<dbReference type="FunFam" id="3.30.420.40:FF:000004">
    <property type="entry name" value="Molecular chaperone DnaK"/>
    <property type="match status" value="1"/>
</dbReference>
<dbReference type="FunFam" id="3.90.640.10:FF:000003">
    <property type="entry name" value="Molecular chaperone DnaK"/>
    <property type="match status" value="1"/>
</dbReference>
<dbReference type="Gene3D" id="1.20.1270.10">
    <property type="match status" value="1"/>
</dbReference>
<dbReference type="Gene3D" id="3.30.420.40">
    <property type="match status" value="2"/>
</dbReference>
<dbReference type="Gene3D" id="3.90.640.10">
    <property type="entry name" value="Actin, Chain A, domain 4"/>
    <property type="match status" value="1"/>
</dbReference>
<dbReference type="Gene3D" id="2.60.34.10">
    <property type="entry name" value="Substrate Binding Domain Of DNAk, Chain A, domain 1"/>
    <property type="match status" value="1"/>
</dbReference>
<dbReference type="HAMAP" id="MF_00332">
    <property type="entry name" value="DnaK"/>
    <property type="match status" value="1"/>
</dbReference>
<dbReference type="InterPro" id="IPR043129">
    <property type="entry name" value="ATPase_NBD"/>
</dbReference>
<dbReference type="InterPro" id="IPR012725">
    <property type="entry name" value="Chaperone_DnaK"/>
</dbReference>
<dbReference type="InterPro" id="IPR018181">
    <property type="entry name" value="Heat_shock_70_CS"/>
</dbReference>
<dbReference type="InterPro" id="IPR029048">
    <property type="entry name" value="HSP70_C_sf"/>
</dbReference>
<dbReference type="InterPro" id="IPR029047">
    <property type="entry name" value="HSP70_peptide-bd_sf"/>
</dbReference>
<dbReference type="InterPro" id="IPR013126">
    <property type="entry name" value="Hsp_70_fam"/>
</dbReference>
<dbReference type="NCBIfam" id="NF001413">
    <property type="entry name" value="PRK00290.1"/>
    <property type="match status" value="1"/>
</dbReference>
<dbReference type="NCBIfam" id="TIGR02350">
    <property type="entry name" value="prok_dnaK"/>
    <property type="match status" value="1"/>
</dbReference>
<dbReference type="PANTHER" id="PTHR19375">
    <property type="entry name" value="HEAT SHOCK PROTEIN 70KDA"/>
    <property type="match status" value="1"/>
</dbReference>
<dbReference type="Pfam" id="PF00012">
    <property type="entry name" value="HSP70"/>
    <property type="match status" value="1"/>
</dbReference>
<dbReference type="PRINTS" id="PR00301">
    <property type="entry name" value="HEATSHOCK70"/>
</dbReference>
<dbReference type="SUPFAM" id="SSF53067">
    <property type="entry name" value="Actin-like ATPase domain"/>
    <property type="match status" value="2"/>
</dbReference>
<dbReference type="SUPFAM" id="SSF100934">
    <property type="entry name" value="Heat shock protein 70kD (HSP70), C-terminal subdomain"/>
    <property type="match status" value="1"/>
</dbReference>
<dbReference type="SUPFAM" id="SSF100920">
    <property type="entry name" value="Heat shock protein 70kD (HSP70), peptide-binding domain"/>
    <property type="match status" value="1"/>
</dbReference>
<dbReference type="PROSITE" id="PS00297">
    <property type="entry name" value="HSP70_1"/>
    <property type="match status" value="1"/>
</dbReference>
<dbReference type="PROSITE" id="PS00329">
    <property type="entry name" value="HSP70_2"/>
    <property type="match status" value="1"/>
</dbReference>
<dbReference type="PROSITE" id="PS01036">
    <property type="entry name" value="HSP70_3"/>
    <property type="match status" value="1"/>
</dbReference>
<accession>Q5E3A7</accession>
<evidence type="ECO:0000255" key="1">
    <source>
        <dbReference type="HAMAP-Rule" id="MF_00332"/>
    </source>
</evidence>
<evidence type="ECO:0000256" key="2">
    <source>
        <dbReference type="SAM" id="MobiDB-lite"/>
    </source>
</evidence>
<gene>
    <name evidence="1" type="primary">dnaK2</name>
    <name type="ordered locus">VF_1994</name>
</gene>
<organism>
    <name type="scientific">Aliivibrio fischeri (strain ATCC 700601 / ES114)</name>
    <name type="common">Vibrio fischeri</name>
    <dbReference type="NCBI Taxonomy" id="312309"/>
    <lineage>
        <taxon>Bacteria</taxon>
        <taxon>Pseudomonadati</taxon>
        <taxon>Pseudomonadota</taxon>
        <taxon>Gammaproteobacteria</taxon>
        <taxon>Vibrionales</taxon>
        <taxon>Vibrionaceae</taxon>
        <taxon>Aliivibrio</taxon>
    </lineage>
</organism>
<reference key="1">
    <citation type="journal article" date="2005" name="Proc. Natl. Acad. Sci. U.S.A.">
        <title>Complete genome sequence of Vibrio fischeri: a symbiotic bacterium with pathogenic congeners.</title>
        <authorList>
            <person name="Ruby E.G."/>
            <person name="Urbanowski M."/>
            <person name="Campbell J."/>
            <person name="Dunn A."/>
            <person name="Faini M."/>
            <person name="Gunsalus R."/>
            <person name="Lostroh P."/>
            <person name="Lupp C."/>
            <person name="McCann J."/>
            <person name="Millikan D."/>
            <person name="Schaefer A."/>
            <person name="Stabb E."/>
            <person name="Stevens A."/>
            <person name="Visick K."/>
            <person name="Whistler C."/>
            <person name="Greenberg E.P."/>
        </authorList>
    </citation>
    <scope>NUCLEOTIDE SEQUENCE [LARGE SCALE GENOMIC DNA]</scope>
    <source>
        <strain>ATCC 700601 / ES114</strain>
    </source>
</reference>
<sequence length="634" mass="68540">MGKIIGIDLGTTNSCVAVLDGDTPRVLENAEGERTTASVIAYTDGETLVGQPAKRQAVTNPQNTLFAIKRLIGRRFEDEEVQRDIEIMPFKIVKADNGDAWVEAKGQKMAAPQVSAEVLKKMKKTAEDFLGEEVTGAVVTVPAYFNDAQRQATKDAGRIAGLDVKRIINEPTAAALAYGLDKKGGDRTIAVYDLGGGTFDISIIEIDNVDGEQTFEVLATNGDTHLGGEDFDNRLINYLVSEFEKEQGINLKNDPLAMQRVKEAAEKAKIELSSAQQTDVNLPYVTADATGPKHMNVKVTRAKLESLVEDLVLRSLEPLKVALADADLSVDEITDVILVGGQTRMPMVQAKVAEFFGKEARRDVNPDEAVAMGAAVQGGVLAGDVKDVLLLDVTPLSFGIETMGGVMTKLIEKNTTIPTKADQTFSTAEDNQSAVTIHVLQGERKQATYNKSLGQFNLEGIQPAPRGMPQIEVTFDLDADGILNVSAKDKATGKEQKITIQASGGLTDEEIEAMVQEAEANKDADKKFEELVTARNQADQMIHGTQKQIEEAGDALPADEKEKIEAAIKALEEVKSGNDKEAIDAKTQELMQAAQKLMEIAQQKAQAQQGADAGEQPKQDDDVVDAEFEEVKDK</sequence>
<comment type="function">
    <text evidence="1">Acts as a chaperone.</text>
</comment>
<comment type="induction">
    <text evidence="1">By stress conditions e.g. heat shock.</text>
</comment>
<comment type="similarity">
    <text evidence="1">Belongs to the heat shock protein 70 family.</text>
</comment>
<proteinExistence type="inferred from homology"/>
<protein>
    <recommendedName>
        <fullName evidence="1">Chaperone protein DnaK 2</fullName>
    </recommendedName>
    <alternativeName>
        <fullName evidence="1">HSP70 2</fullName>
    </alternativeName>
    <alternativeName>
        <fullName evidence="1">Heat shock 70 kDa protein 2</fullName>
    </alternativeName>
    <alternativeName>
        <fullName evidence="1">Heat shock protein 70 2</fullName>
    </alternativeName>
</protein>